<feature type="chain" id="PRO_0000223096" description="Zinc finger SWIM domain-containing protein 1">
    <location>
        <begin position="1"/>
        <end position="455"/>
    </location>
</feature>
<feature type="zinc finger region" description="SWIM-type" evidence="1">
    <location>
        <begin position="333"/>
        <end position="375"/>
    </location>
</feature>
<feature type="region of interest" description="Disordered" evidence="2">
    <location>
        <begin position="264"/>
        <end position="288"/>
    </location>
</feature>
<accession>Q9CWV7</accession>
<accession>A2A5J3</accession>
<accession>Q8R163</accession>
<evidence type="ECO:0000255" key="1">
    <source>
        <dbReference type="PROSITE-ProRule" id="PRU00325"/>
    </source>
</evidence>
<evidence type="ECO:0000256" key="2">
    <source>
        <dbReference type="SAM" id="MobiDB-lite"/>
    </source>
</evidence>
<evidence type="ECO:0000305" key="3"/>
<keyword id="KW-0479">Metal-binding</keyword>
<keyword id="KW-1185">Reference proteome</keyword>
<keyword id="KW-0862">Zinc</keyword>
<keyword id="KW-0863">Zinc-finger</keyword>
<name>ZSWM1_MOUSE</name>
<reference key="1">
    <citation type="journal article" date="2005" name="Science">
        <title>The transcriptional landscape of the mammalian genome.</title>
        <authorList>
            <person name="Carninci P."/>
            <person name="Kasukawa T."/>
            <person name="Katayama S."/>
            <person name="Gough J."/>
            <person name="Frith M.C."/>
            <person name="Maeda N."/>
            <person name="Oyama R."/>
            <person name="Ravasi T."/>
            <person name="Lenhard B."/>
            <person name="Wells C."/>
            <person name="Kodzius R."/>
            <person name="Shimokawa K."/>
            <person name="Bajic V.B."/>
            <person name="Brenner S.E."/>
            <person name="Batalov S."/>
            <person name="Forrest A.R."/>
            <person name="Zavolan M."/>
            <person name="Davis M.J."/>
            <person name="Wilming L.G."/>
            <person name="Aidinis V."/>
            <person name="Allen J.E."/>
            <person name="Ambesi-Impiombato A."/>
            <person name="Apweiler R."/>
            <person name="Aturaliya R.N."/>
            <person name="Bailey T.L."/>
            <person name="Bansal M."/>
            <person name="Baxter L."/>
            <person name="Beisel K.W."/>
            <person name="Bersano T."/>
            <person name="Bono H."/>
            <person name="Chalk A.M."/>
            <person name="Chiu K.P."/>
            <person name="Choudhary V."/>
            <person name="Christoffels A."/>
            <person name="Clutterbuck D.R."/>
            <person name="Crowe M.L."/>
            <person name="Dalla E."/>
            <person name="Dalrymple B.P."/>
            <person name="de Bono B."/>
            <person name="Della Gatta G."/>
            <person name="di Bernardo D."/>
            <person name="Down T."/>
            <person name="Engstrom P."/>
            <person name="Fagiolini M."/>
            <person name="Faulkner G."/>
            <person name="Fletcher C.F."/>
            <person name="Fukushima T."/>
            <person name="Furuno M."/>
            <person name="Futaki S."/>
            <person name="Gariboldi M."/>
            <person name="Georgii-Hemming P."/>
            <person name="Gingeras T.R."/>
            <person name="Gojobori T."/>
            <person name="Green R.E."/>
            <person name="Gustincich S."/>
            <person name="Harbers M."/>
            <person name="Hayashi Y."/>
            <person name="Hensch T.K."/>
            <person name="Hirokawa N."/>
            <person name="Hill D."/>
            <person name="Huminiecki L."/>
            <person name="Iacono M."/>
            <person name="Ikeo K."/>
            <person name="Iwama A."/>
            <person name="Ishikawa T."/>
            <person name="Jakt M."/>
            <person name="Kanapin A."/>
            <person name="Katoh M."/>
            <person name="Kawasawa Y."/>
            <person name="Kelso J."/>
            <person name="Kitamura H."/>
            <person name="Kitano H."/>
            <person name="Kollias G."/>
            <person name="Krishnan S.P."/>
            <person name="Kruger A."/>
            <person name="Kummerfeld S.K."/>
            <person name="Kurochkin I.V."/>
            <person name="Lareau L.F."/>
            <person name="Lazarevic D."/>
            <person name="Lipovich L."/>
            <person name="Liu J."/>
            <person name="Liuni S."/>
            <person name="McWilliam S."/>
            <person name="Madan Babu M."/>
            <person name="Madera M."/>
            <person name="Marchionni L."/>
            <person name="Matsuda H."/>
            <person name="Matsuzawa S."/>
            <person name="Miki H."/>
            <person name="Mignone F."/>
            <person name="Miyake S."/>
            <person name="Morris K."/>
            <person name="Mottagui-Tabar S."/>
            <person name="Mulder N."/>
            <person name="Nakano N."/>
            <person name="Nakauchi H."/>
            <person name="Ng P."/>
            <person name="Nilsson R."/>
            <person name="Nishiguchi S."/>
            <person name="Nishikawa S."/>
            <person name="Nori F."/>
            <person name="Ohara O."/>
            <person name="Okazaki Y."/>
            <person name="Orlando V."/>
            <person name="Pang K.C."/>
            <person name="Pavan W.J."/>
            <person name="Pavesi G."/>
            <person name="Pesole G."/>
            <person name="Petrovsky N."/>
            <person name="Piazza S."/>
            <person name="Reed J."/>
            <person name="Reid J.F."/>
            <person name="Ring B.Z."/>
            <person name="Ringwald M."/>
            <person name="Rost B."/>
            <person name="Ruan Y."/>
            <person name="Salzberg S.L."/>
            <person name="Sandelin A."/>
            <person name="Schneider C."/>
            <person name="Schoenbach C."/>
            <person name="Sekiguchi K."/>
            <person name="Semple C.A."/>
            <person name="Seno S."/>
            <person name="Sessa L."/>
            <person name="Sheng Y."/>
            <person name="Shibata Y."/>
            <person name="Shimada H."/>
            <person name="Shimada K."/>
            <person name="Silva D."/>
            <person name="Sinclair B."/>
            <person name="Sperling S."/>
            <person name="Stupka E."/>
            <person name="Sugiura K."/>
            <person name="Sultana R."/>
            <person name="Takenaka Y."/>
            <person name="Taki K."/>
            <person name="Tammoja K."/>
            <person name="Tan S.L."/>
            <person name="Tang S."/>
            <person name="Taylor M.S."/>
            <person name="Tegner J."/>
            <person name="Teichmann S.A."/>
            <person name="Ueda H.R."/>
            <person name="van Nimwegen E."/>
            <person name="Verardo R."/>
            <person name="Wei C.L."/>
            <person name="Yagi K."/>
            <person name="Yamanishi H."/>
            <person name="Zabarovsky E."/>
            <person name="Zhu S."/>
            <person name="Zimmer A."/>
            <person name="Hide W."/>
            <person name="Bult C."/>
            <person name="Grimmond S.M."/>
            <person name="Teasdale R.D."/>
            <person name="Liu E.T."/>
            <person name="Brusic V."/>
            <person name="Quackenbush J."/>
            <person name="Wahlestedt C."/>
            <person name="Mattick J.S."/>
            <person name="Hume D.A."/>
            <person name="Kai C."/>
            <person name="Sasaki D."/>
            <person name="Tomaru Y."/>
            <person name="Fukuda S."/>
            <person name="Kanamori-Katayama M."/>
            <person name="Suzuki M."/>
            <person name="Aoki J."/>
            <person name="Arakawa T."/>
            <person name="Iida J."/>
            <person name="Imamura K."/>
            <person name="Itoh M."/>
            <person name="Kato T."/>
            <person name="Kawaji H."/>
            <person name="Kawagashira N."/>
            <person name="Kawashima T."/>
            <person name="Kojima M."/>
            <person name="Kondo S."/>
            <person name="Konno H."/>
            <person name="Nakano K."/>
            <person name="Ninomiya N."/>
            <person name="Nishio T."/>
            <person name="Okada M."/>
            <person name="Plessy C."/>
            <person name="Shibata K."/>
            <person name="Shiraki T."/>
            <person name="Suzuki S."/>
            <person name="Tagami M."/>
            <person name="Waki K."/>
            <person name="Watahiki A."/>
            <person name="Okamura-Oho Y."/>
            <person name="Suzuki H."/>
            <person name="Kawai J."/>
            <person name="Hayashizaki Y."/>
        </authorList>
    </citation>
    <scope>NUCLEOTIDE SEQUENCE [LARGE SCALE MRNA]</scope>
    <source>
        <strain>C57BL/6J</strain>
        <tissue>Embryonic stem cell</tissue>
    </source>
</reference>
<reference key="2">
    <citation type="journal article" date="2009" name="PLoS Biol.">
        <title>Lineage-specific biology revealed by a finished genome assembly of the mouse.</title>
        <authorList>
            <person name="Church D.M."/>
            <person name="Goodstadt L."/>
            <person name="Hillier L.W."/>
            <person name="Zody M.C."/>
            <person name="Goldstein S."/>
            <person name="She X."/>
            <person name="Bult C.J."/>
            <person name="Agarwala R."/>
            <person name="Cherry J.L."/>
            <person name="DiCuccio M."/>
            <person name="Hlavina W."/>
            <person name="Kapustin Y."/>
            <person name="Meric P."/>
            <person name="Maglott D."/>
            <person name="Birtle Z."/>
            <person name="Marques A.C."/>
            <person name="Graves T."/>
            <person name="Zhou S."/>
            <person name="Teague B."/>
            <person name="Potamousis K."/>
            <person name="Churas C."/>
            <person name="Place M."/>
            <person name="Herschleb J."/>
            <person name="Runnheim R."/>
            <person name="Forrest D."/>
            <person name="Amos-Landgraf J."/>
            <person name="Schwartz D.C."/>
            <person name="Cheng Z."/>
            <person name="Lindblad-Toh K."/>
            <person name="Eichler E.E."/>
            <person name="Ponting C.P."/>
        </authorList>
    </citation>
    <scope>NUCLEOTIDE SEQUENCE [LARGE SCALE GENOMIC DNA]</scope>
    <source>
        <strain>C57BL/6J</strain>
    </source>
</reference>
<reference key="3">
    <citation type="journal article" date="2004" name="Genome Res.">
        <title>The status, quality, and expansion of the NIH full-length cDNA project: the Mammalian Gene Collection (MGC).</title>
        <authorList>
            <consortium name="The MGC Project Team"/>
        </authorList>
    </citation>
    <scope>NUCLEOTIDE SEQUENCE [LARGE SCALE MRNA]</scope>
    <source>
        <strain>C57BL/6J</strain>
        <tissue>Brain</tissue>
        <tissue>Kidney</tissue>
    </source>
</reference>
<proteinExistence type="evidence at transcript level"/>
<organism>
    <name type="scientific">Mus musculus</name>
    <name type="common">Mouse</name>
    <dbReference type="NCBI Taxonomy" id="10090"/>
    <lineage>
        <taxon>Eukaryota</taxon>
        <taxon>Metazoa</taxon>
        <taxon>Chordata</taxon>
        <taxon>Craniata</taxon>
        <taxon>Vertebrata</taxon>
        <taxon>Euteleostomi</taxon>
        <taxon>Mammalia</taxon>
        <taxon>Eutheria</taxon>
        <taxon>Euarchontoglires</taxon>
        <taxon>Glires</taxon>
        <taxon>Rodentia</taxon>
        <taxon>Myomorpha</taxon>
        <taxon>Muroidea</taxon>
        <taxon>Muridae</taxon>
        <taxon>Murinae</taxon>
        <taxon>Mus</taxon>
        <taxon>Mus</taxon>
    </lineage>
</organism>
<comment type="sequence caution" evidence="3">
    <conflict type="erroneous initiation">
        <sequence resource="EMBL-CDS" id="AAH25184"/>
    </conflict>
</comment>
<dbReference type="EMBL" id="AK010358">
    <property type="protein sequence ID" value="BAB26878.1"/>
    <property type="molecule type" value="mRNA"/>
</dbReference>
<dbReference type="EMBL" id="AL591495">
    <property type="status" value="NOT_ANNOTATED_CDS"/>
    <property type="molecule type" value="Genomic_DNA"/>
</dbReference>
<dbReference type="EMBL" id="BC025184">
    <property type="protein sequence ID" value="AAH25184.1"/>
    <property type="status" value="ALT_INIT"/>
    <property type="molecule type" value="mRNA"/>
</dbReference>
<dbReference type="EMBL" id="BC046831">
    <property type="protein sequence ID" value="AAH46831.1"/>
    <property type="molecule type" value="mRNA"/>
</dbReference>
<dbReference type="CCDS" id="CCDS17059.1"/>
<dbReference type="RefSeq" id="NP_082304.1">
    <property type="nucleotide sequence ID" value="NM_028028.3"/>
</dbReference>
<dbReference type="FunCoup" id="Q9CWV7">
    <property type="interactions" value="1406"/>
</dbReference>
<dbReference type="STRING" id="10090.ENSMUSP00000017908"/>
<dbReference type="PhosphoSitePlus" id="Q9CWV7"/>
<dbReference type="PaxDb" id="10090-ENSMUSP00000017908"/>
<dbReference type="ProteomicsDB" id="275108"/>
<dbReference type="Antibodypedia" id="27817">
    <property type="antibodies" value="79 antibodies from 16 providers"/>
</dbReference>
<dbReference type="DNASU" id="71971"/>
<dbReference type="Ensembl" id="ENSMUST00000017908.3">
    <property type="protein sequence ID" value="ENSMUSP00000017908.3"/>
    <property type="gene ID" value="ENSMUSG00000017764.3"/>
</dbReference>
<dbReference type="GeneID" id="71971"/>
<dbReference type="KEGG" id="mmu:71971"/>
<dbReference type="UCSC" id="uc008nwi.1">
    <property type="organism name" value="mouse"/>
</dbReference>
<dbReference type="AGR" id="MGI:1919221"/>
<dbReference type="CTD" id="90204"/>
<dbReference type="MGI" id="MGI:1919221">
    <property type="gene designation" value="Zswim1"/>
</dbReference>
<dbReference type="VEuPathDB" id="HostDB:ENSMUSG00000017764"/>
<dbReference type="eggNOG" id="ENOG502RNJT">
    <property type="taxonomic scope" value="Eukaryota"/>
</dbReference>
<dbReference type="GeneTree" id="ENSGT00390000017273"/>
<dbReference type="HOGENOM" id="CLU_563302_0_0_1"/>
<dbReference type="InParanoid" id="Q9CWV7"/>
<dbReference type="OMA" id="CHFSQTF"/>
<dbReference type="OrthoDB" id="124789at2759"/>
<dbReference type="PhylomeDB" id="Q9CWV7"/>
<dbReference type="TreeFam" id="TF335703"/>
<dbReference type="BioGRID-ORCS" id="71971">
    <property type="hits" value="1 hit in 77 CRISPR screens"/>
</dbReference>
<dbReference type="ChiTaRS" id="Zswim1">
    <property type="organism name" value="mouse"/>
</dbReference>
<dbReference type="PRO" id="PR:Q9CWV7"/>
<dbReference type="Proteomes" id="UP000000589">
    <property type="component" value="Chromosome 2"/>
</dbReference>
<dbReference type="RNAct" id="Q9CWV7">
    <property type="molecule type" value="protein"/>
</dbReference>
<dbReference type="Bgee" id="ENSMUSG00000017764">
    <property type="expression patterns" value="Expressed in embryonic brain and 252 other cell types or tissues"/>
</dbReference>
<dbReference type="ExpressionAtlas" id="Q9CWV7">
    <property type="expression patterns" value="baseline and differential"/>
</dbReference>
<dbReference type="GO" id="GO:0005634">
    <property type="term" value="C:nucleus"/>
    <property type="evidence" value="ECO:0000314"/>
    <property type="project" value="MGI"/>
</dbReference>
<dbReference type="GO" id="GO:0008270">
    <property type="term" value="F:zinc ion binding"/>
    <property type="evidence" value="ECO:0007669"/>
    <property type="project" value="UniProtKB-KW"/>
</dbReference>
<dbReference type="InterPro" id="IPR052579">
    <property type="entry name" value="Zinc_finger_SWIM"/>
</dbReference>
<dbReference type="InterPro" id="IPR007527">
    <property type="entry name" value="Znf_SWIM"/>
</dbReference>
<dbReference type="InterPro" id="IPR048326">
    <property type="entry name" value="ZSWIM1-3_helical"/>
</dbReference>
<dbReference type="InterPro" id="IPR048324">
    <property type="entry name" value="ZSWIM1-3_RNaseH-like"/>
</dbReference>
<dbReference type="InterPro" id="IPR045563">
    <property type="entry name" value="ZSWIM1/3_C"/>
</dbReference>
<dbReference type="PANTHER" id="PTHR31569">
    <property type="entry name" value="SWIM-TYPE DOMAIN-CONTAINING PROTEIN"/>
    <property type="match status" value="1"/>
</dbReference>
<dbReference type="PANTHER" id="PTHR31569:SF0">
    <property type="entry name" value="ZINC FINGER SWIM DOMAIN-CONTAINING PROTEIN 1"/>
    <property type="match status" value="1"/>
</dbReference>
<dbReference type="Pfam" id="PF04434">
    <property type="entry name" value="SWIM"/>
    <property type="match status" value="1"/>
</dbReference>
<dbReference type="Pfam" id="PF19286">
    <property type="entry name" value="ZSWIM1-3_C"/>
    <property type="match status" value="1"/>
</dbReference>
<dbReference type="Pfam" id="PF21600">
    <property type="entry name" value="ZSWIM1-3_helical"/>
    <property type="match status" value="1"/>
</dbReference>
<dbReference type="Pfam" id="PF21056">
    <property type="entry name" value="ZSWIM1-3_RNaseH-like"/>
    <property type="match status" value="1"/>
</dbReference>
<dbReference type="PROSITE" id="PS50966">
    <property type="entry name" value="ZF_SWIM"/>
    <property type="match status" value="1"/>
</dbReference>
<sequence length="455" mass="51481">MALTMLNGLLIKDSSPPMLHQISKTPQLDAFNYQSCFMQDLFAHFPEVLFIHRTYNPRGKVLYTFLVDGPRVQVEGPLARAVYFAIPTNEDARGLAQMFQVFKKFNPAWERVNTILVDPHFLLLPTLTMEFPTAEVLLSAFHICKFLQGKFYQLPLEQPVQRLLLSSLQSTMCSATAGNLRKLYTLLNNCIPSSRLPELHSHWLLNDRIWLAHRWRSRAQSSRYFQSLEIMAHILSQFFGTTPFEKQGMASVFRYMQQNSSDKASLSLAETPQDSHTPSEASAENPNTEQLVEARIQHSLNAICTGPAAQLCLGELAVVQKSMHLIGSGSEKMSIQILEDTHTVQPQPPASCSCYFNQAFHLPCRHILAMLSARQQVLQPDMLPAQWTSGCASSLDSILGSKWSASLDKHLAVTLLTEEVGRLLQHCSEEEFERRYSTLRELADNWIGPYEQVQL</sequence>
<gene>
    <name type="primary">Zswim1</name>
</gene>
<protein>
    <recommendedName>
        <fullName>Zinc finger SWIM domain-containing protein 1</fullName>
    </recommendedName>
</protein>